<gene>
    <name evidence="2" type="primary">dhmA</name>
    <name type="ordered locus">Pcryo_1253</name>
</gene>
<proteinExistence type="evidence at protein level"/>
<organism>
    <name type="scientific">Psychrobacter cryohalolentis (strain ATCC BAA-1226 / DSM 17306 / VKM B-2378 / K5)</name>
    <dbReference type="NCBI Taxonomy" id="335284"/>
    <lineage>
        <taxon>Bacteria</taxon>
        <taxon>Pseudomonadati</taxon>
        <taxon>Pseudomonadota</taxon>
        <taxon>Gammaproteobacteria</taxon>
        <taxon>Moraxellales</taxon>
        <taxon>Moraxellaceae</taxon>
        <taxon>Psychrobacter</taxon>
    </lineage>
</organism>
<sequence>MKILRTPDSRFANLPDYNFDPHYLMVDDSEDSELRVHYLDEGPRDADPVLLLHGEPSWCYLYRKMIPILTAAGHRVIAPDLPGFGRSDKPASRTDYTYQRHVNWMQSVLDQLDLNNITLFCQDWGGLIGLRLVAENPDRFARVAAGNTMLPTGDHDLGEGFRKWQQFSQEIPQFHVGGTIKSGTVTKLSQAVIDAYNAPFPDESYKEGARQFPLLVPSTPDDPASENNRAAWIELSKWTKPFITLFSDSDPVTAGGDRIMQKIIPGTKGQAHTTIANGGHFLQEDQGEKVAKLLVQFIHDNPR</sequence>
<keyword id="KW-0002">3D-structure</keyword>
<keyword id="KW-0378">Hydrolase</keyword>
<accession>Q1QBB9</accession>
<protein>
    <recommendedName>
        <fullName evidence="2">Haloalkane dehalogenase</fullName>
        <ecNumber evidence="2">3.8.1.5</ecNumber>
    </recommendedName>
</protein>
<name>DHMA_PSYCK</name>
<evidence type="ECO:0000255" key="1"/>
<evidence type="ECO:0000255" key="2">
    <source>
        <dbReference type="HAMAP-Rule" id="MF_01230"/>
    </source>
</evidence>
<evidence type="ECO:0007829" key="3">
    <source>
        <dbReference type="PDB" id="6F9O"/>
    </source>
</evidence>
<feature type="chain" id="PRO_1000066842" description="Haloalkane dehalogenase">
    <location>
        <begin position="1"/>
        <end position="303"/>
    </location>
</feature>
<feature type="domain" description="AB hydrolase-1" evidence="1">
    <location>
        <begin position="48"/>
        <end position="192"/>
    </location>
</feature>
<feature type="active site" description="Nucleophile" evidence="2">
    <location>
        <position position="123"/>
    </location>
</feature>
<feature type="active site" description="Proton donor" evidence="2">
    <location>
        <position position="250"/>
    </location>
</feature>
<feature type="active site" description="Proton acceptor" evidence="2">
    <location>
        <position position="280"/>
    </location>
</feature>
<feature type="helix" evidence="3">
    <location>
        <begin position="8"/>
        <end position="11"/>
    </location>
</feature>
<feature type="strand" evidence="3">
    <location>
        <begin position="22"/>
        <end position="27"/>
    </location>
</feature>
<feature type="strand" evidence="3">
    <location>
        <begin position="29"/>
        <end position="42"/>
    </location>
</feature>
<feature type="strand" evidence="3">
    <location>
        <begin position="48"/>
        <end position="52"/>
    </location>
</feature>
<feature type="helix" evidence="3">
    <location>
        <begin position="59"/>
        <end position="62"/>
    </location>
</feature>
<feature type="turn" evidence="3">
    <location>
        <begin position="63"/>
        <end position="65"/>
    </location>
</feature>
<feature type="helix" evidence="3">
    <location>
        <begin position="66"/>
        <end position="71"/>
    </location>
</feature>
<feature type="strand" evidence="3">
    <location>
        <begin position="75"/>
        <end position="79"/>
    </location>
</feature>
<feature type="strand" evidence="3">
    <location>
        <begin position="89"/>
        <end position="92"/>
    </location>
</feature>
<feature type="helix" evidence="3">
    <location>
        <begin position="93"/>
        <end position="95"/>
    </location>
</feature>
<feature type="helix" evidence="3">
    <location>
        <begin position="98"/>
        <end position="112"/>
    </location>
</feature>
<feature type="strand" evidence="3">
    <location>
        <begin position="116"/>
        <end position="121"/>
    </location>
</feature>
<feature type="helix" evidence="3">
    <location>
        <begin position="124"/>
        <end position="135"/>
    </location>
</feature>
<feature type="helix" evidence="3">
    <location>
        <begin position="137"/>
        <end position="139"/>
    </location>
</feature>
<feature type="strand" evidence="3">
    <location>
        <begin position="140"/>
        <end position="145"/>
    </location>
</feature>
<feature type="strand" evidence="3">
    <location>
        <begin position="153"/>
        <end position="155"/>
    </location>
</feature>
<feature type="helix" evidence="3">
    <location>
        <begin position="159"/>
        <end position="170"/>
    </location>
</feature>
<feature type="strand" evidence="3">
    <location>
        <begin position="171"/>
        <end position="173"/>
    </location>
</feature>
<feature type="helix" evidence="3">
    <location>
        <begin position="176"/>
        <end position="182"/>
    </location>
</feature>
<feature type="helix" evidence="3">
    <location>
        <begin position="190"/>
        <end position="197"/>
    </location>
</feature>
<feature type="helix" evidence="3">
    <location>
        <begin position="203"/>
        <end position="205"/>
    </location>
</feature>
<feature type="helix" evidence="3">
    <location>
        <begin position="207"/>
        <end position="211"/>
    </location>
</feature>
<feature type="helix" evidence="3">
    <location>
        <begin position="212"/>
        <end position="215"/>
    </location>
</feature>
<feature type="helix" evidence="3">
    <location>
        <begin position="225"/>
        <end position="235"/>
    </location>
</feature>
<feature type="strand" evidence="3">
    <location>
        <begin position="242"/>
        <end position="244"/>
    </location>
</feature>
<feature type="strand" evidence="3">
    <location>
        <begin position="247"/>
        <end position="249"/>
    </location>
</feature>
<feature type="turn" evidence="3">
    <location>
        <begin position="251"/>
        <end position="255"/>
    </location>
</feature>
<feature type="helix" evidence="3">
    <location>
        <begin position="256"/>
        <end position="263"/>
    </location>
</feature>
<feature type="helix" evidence="3">
    <location>
        <begin position="265"/>
        <end position="267"/>
    </location>
</feature>
<feature type="strand" evidence="3">
    <location>
        <begin position="275"/>
        <end position="281"/>
    </location>
</feature>
<feature type="helix" evidence="3">
    <location>
        <begin position="282"/>
        <end position="299"/>
    </location>
</feature>
<comment type="function">
    <text evidence="2">Catalyzes hydrolytic cleavage of carbon-halogen bonds in halogenated aliphatic compounds, leading to the formation of the corresponding primary alcohols, halide ions and protons.</text>
</comment>
<comment type="catalytic activity">
    <reaction evidence="2">
        <text>1-haloalkane + H2O = a halide anion + a primary alcohol + H(+)</text>
        <dbReference type="Rhea" id="RHEA:19081"/>
        <dbReference type="ChEBI" id="CHEBI:15377"/>
        <dbReference type="ChEBI" id="CHEBI:15378"/>
        <dbReference type="ChEBI" id="CHEBI:15734"/>
        <dbReference type="ChEBI" id="CHEBI:16042"/>
        <dbReference type="ChEBI" id="CHEBI:18060"/>
        <dbReference type="EC" id="3.8.1.5"/>
    </reaction>
</comment>
<comment type="subunit">
    <text evidence="2">Monomer.</text>
</comment>
<comment type="similarity">
    <text evidence="2">Belongs to the haloalkane dehalogenase family. Type 1 subfamily.</text>
</comment>
<dbReference type="EC" id="3.8.1.5" evidence="2"/>
<dbReference type="EMBL" id="CP000323">
    <property type="protein sequence ID" value="ABE75034.1"/>
    <property type="molecule type" value="Genomic_DNA"/>
</dbReference>
<dbReference type="RefSeq" id="WP_011513586.1">
    <property type="nucleotide sequence ID" value="NC_007969.1"/>
</dbReference>
<dbReference type="PDB" id="6F9O">
    <property type="method" value="X-ray"/>
    <property type="resolution" value="1.05 A"/>
    <property type="chains" value="A=1-303"/>
</dbReference>
<dbReference type="PDBsum" id="6F9O"/>
<dbReference type="SMR" id="Q1QBB9"/>
<dbReference type="STRING" id="335284.Pcryo_1253"/>
<dbReference type="ESTHER" id="psyck-q1qbb9">
    <property type="family name" value="Haloalkane_dehalogenase-HLD1"/>
</dbReference>
<dbReference type="MEROPS" id="S33.990"/>
<dbReference type="KEGG" id="pcr:Pcryo_1253"/>
<dbReference type="eggNOG" id="COG0596">
    <property type="taxonomic scope" value="Bacteria"/>
</dbReference>
<dbReference type="HOGENOM" id="CLU_020336_13_3_6"/>
<dbReference type="BRENDA" id="3.8.1.5">
    <property type="organism ID" value="13075"/>
</dbReference>
<dbReference type="Proteomes" id="UP000002425">
    <property type="component" value="Chromosome"/>
</dbReference>
<dbReference type="GO" id="GO:0004301">
    <property type="term" value="F:epoxide hydrolase activity"/>
    <property type="evidence" value="ECO:0007669"/>
    <property type="project" value="TreeGrafter"/>
</dbReference>
<dbReference type="GO" id="GO:0018786">
    <property type="term" value="F:haloalkane dehalogenase activity"/>
    <property type="evidence" value="ECO:0007669"/>
    <property type="project" value="UniProtKB-UniRule"/>
</dbReference>
<dbReference type="Gene3D" id="3.40.50.1820">
    <property type="entry name" value="alpha/beta hydrolase"/>
    <property type="match status" value="1"/>
</dbReference>
<dbReference type="HAMAP" id="MF_01230">
    <property type="entry name" value="Haloalk_dehal_type1"/>
    <property type="match status" value="1"/>
</dbReference>
<dbReference type="InterPro" id="IPR000073">
    <property type="entry name" value="AB_hydrolase_1"/>
</dbReference>
<dbReference type="InterPro" id="IPR029058">
    <property type="entry name" value="AB_hydrolase_fold"/>
</dbReference>
<dbReference type="InterPro" id="IPR000639">
    <property type="entry name" value="Epox_hydrolase-like"/>
</dbReference>
<dbReference type="InterPro" id="IPR051340">
    <property type="entry name" value="Haloalkane_dehalogenase"/>
</dbReference>
<dbReference type="InterPro" id="IPR023489">
    <property type="entry name" value="Haloalkane_dehalogenase_1"/>
</dbReference>
<dbReference type="NCBIfam" id="NF002043">
    <property type="entry name" value="PRK00870.1"/>
    <property type="match status" value="1"/>
</dbReference>
<dbReference type="PANTHER" id="PTHR42977:SF3">
    <property type="entry name" value="AB HYDROLASE-1 DOMAIN-CONTAINING PROTEIN"/>
    <property type="match status" value="1"/>
</dbReference>
<dbReference type="PANTHER" id="PTHR42977">
    <property type="entry name" value="HYDROLASE-RELATED"/>
    <property type="match status" value="1"/>
</dbReference>
<dbReference type="Pfam" id="PF00561">
    <property type="entry name" value="Abhydrolase_1"/>
    <property type="match status" value="1"/>
</dbReference>
<dbReference type="PRINTS" id="PR00111">
    <property type="entry name" value="ABHYDROLASE"/>
</dbReference>
<dbReference type="PRINTS" id="PR00412">
    <property type="entry name" value="EPOXHYDRLASE"/>
</dbReference>
<dbReference type="SUPFAM" id="SSF53474">
    <property type="entry name" value="alpha/beta-Hydrolases"/>
    <property type="match status" value="1"/>
</dbReference>
<reference key="1">
    <citation type="submission" date="2006-03" db="EMBL/GenBank/DDBJ databases">
        <title>Complete sequence of chromosome of Psychrobacter cryohalolentis K5.</title>
        <authorList>
            <consortium name="US DOE Joint Genome Institute"/>
            <person name="Copeland A."/>
            <person name="Lucas S."/>
            <person name="Lapidus A."/>
            <person name="Barry K."/>
            <person name="Detter J.C."/>
            <person name="Glavina T."/>
            <person name="Hammon N."/>
            <person name="Israni S."/>
            <person name="Dalin E."/>
            <person name="Tice H."/>
            <person name="Pitluck S."/>
            <person name="Brettin T."/>
            <person name="Bruce D."/>
            <person name="Han C."/>
            <person name="Tapia R."/>
            <person name="Sims D.R."/>
            <person name="Gilna P."/>
            <person name="Schmutz J."/>
            <person name="Larimer F."/>
            <person name="Land M."/>
            <person name="Hauser L."/>
            <person name="Kyrpides N."/>
            <person name="Kim E."/>
            <person name="Richardson P."/>
        </authorList>
    </citation>
    <scope>NUCLEOTIDE SEQUENCE [LARGE SCALE GENOMIC DNA]</scope>
    <source>
        <strain>ATCC BAA-1226 / DSM 17306 / VKM B-2378 / K5</strain>
    </source>
</reference>